<sequence>MKVSLVLLIAVFGLAMVAAEETLESKLQMALKSLLQENEELNLEGRDTKGGCERATNNCNGHGDCVQGRWGQYYCKCTLPYRVGGSESSCYMPKDKEEDVEIETKDTVARCERDTKNCDGHGTCQLSTFGRRTGQYICFCDAGYRKPNSYGGCSPSSARELEYLSYVARDVEMEMLARDSVYQCNRDTNSCDGFGKCEKSTFGRTTGQYICNCDDGYRNNAYGGCSPRTEREIEYLSMIARDQELEMQARDSLPQCNRDTNYCDGFGQCVKSTFGRTTGQYICSCNDGYENNLYGGCSPKDNEDEEVDTDRKMEILRSLANLLEE</sequence>
<comment type="function">
    <text>The EGIP peptides are factors effective to extrude the archenteron toward outside of embryos. May have a role in the induction of gastrulation.</text>
</comment>
<comment type="subcellular location">
    <subcellularLocation>
        <location>Secreted</location>
        <location>Extracellular space</location>
        <location>Extracellular matrix</location>
    </subcellularLocation>
</comment>
<keyword id="KW-0165">Cleavage on pair of basic residues</keyword>
<keyword id="KW-0217">Developmental protein</keyword>
<keyword id="KW-0903">Direct protein sequencing</keyword>
<keyword id="KW-1015">Disulfide bond</keyword>
<keyword id="KW-0245">EGF-like domain</keyword>
<keyword id="KW-0272">Extracellular matrix</keyword>
<keyword id="KW-0306">Gastrulation</keyword>
<keyword id="KW-0677">Repeat</keyword>
<keyword id="KW-0964">Secreted</keyword>
<keyword id="KW-0732">Signal</keyword>
<protein>
    <recommendedName>
        <fullName>Exogastrula-inducing polypeptide</fullName>
        <shortName>EGIP</shortName>
    </recommendedName>
    <component>
        <recommendedName>
            <fullName>Exogastrula-inducing peptide C</fullName>
            <shortName>EGIP-C</shortName>
        </recommendedName>
    </component>
    <component>
        <recommendedName>
            <fullName>Exogastrula-inducing peptide D</fullName>
            <shortName>EGIP-D</shortName>
        </recommendedName>
    </component>
    <component>
        <recommendedName>
            <fullName>Exogastrula-inducing peptide A</fullName>
            <shortName>EGIP-A</shortName>
        </recommendedName>
    </component>
    <component>
        <recommendedName>
            <fullName>EGIP-X</fullName>
        </recommendedName>
    </component>
</protein>
<name>EGIP_HELCR</name>
<feature type="signal peptide" evidence="1">
    <location>
        <begin position="1"/>
        <end position="19"/>
    </location>
</feature>
<feature type="propeptide" id="PRO_0000007548">
    <location>
        <begin position="20"/>
        <end position="45"/>
    </location>
</feature>
<feature type="peptide" id="PRO_0000007549" description="Exogastrula-inducing peptide C">
    <location>
        <begin position="47"/>
        <end position="104"/>
    </location>
</feature>
<feature type="peptide" id="PRO_0000007550" description="Exogastrula-inducing peptide D">
    <location>
        <begin position="106"/>
        <end position="158"/>
    </location>
</feature>
<feature type="propeptide" id="PRO_0000007551">
    <location>
        <begin position="160"/>
        <end position="177"/>
    </location>
</feature>
<feature type="peptide" id="PRO_0000007552" description="Exogastrula-inducing peptide A">
    <location>
        <begin position="179"/>
        <end position="230"/>
    </location>
</feature>
<feature type="propeptide" id="PRO_0000007553">
    <location>
        <begin position="232"/>
        <end position="249"/>
    </location>
</feature>
<feature type="peptide" id="PRO_0000007554" description="EGIP-X" evidence="3">
    <location>
        <begin position="251"/>
        <end position="310"/>
    </location>
</feature>
<feature type="propeptide" id="PRO_0000007555">
    <location>
        <begin position="313"/>
        <end position="325"/>
    </location>
</feature>
<feature type="domain" description="EGF-like 1" evidence="2">
    <location>
        <begin position="48"/>
        <end position="91"/>
    </location>
</feature>
<feature type="domain" description="EGF-like 2" evidence="2">
    <location>
        <begin position="107"/>
        <end position="154"/>
    </location>
</feature>
<feature type="domain" description="EGF-like 3" evidence="2">
    <location>
        <begin position="180"/>
        <end position="226"/>
    </location>
</feature>
<feature type="domain" description="EGF-like 4" evidence="2">
    <location>
        <begin position="252"/>
        <end position="298"/>
    </location>
</feature>
<feature type="disulfide bond" evidence="2">
    <location>
        <begin position="52"/>
        <end position="65"/>
    </location>
</feature>
<feature type="disulfide bond" evidence="2">
    <location>
        <begin position="59"/>
        <end position="75"/>
    </location>
</feature>
<feature type="disulfide bond" evidence="2">
    <location>
        <begin position="77"/>
        <end position="90"/>
    </location>
</feature>
<feature type="disulfide bond" evidence="2">
    <location>
        <begin position="111"/>
        <end position="124"/>
    </location>
</feature>
<feature type="disulfide bond" evidence="2">
    <location>
        <begin position="118"/>
        <end position="138"/>
    </location>
</feature>
<feature type="disulfide bond" evidence="2">
    <location>
        <begin position="140"/>
        <end position="153"/>
    </location>
</feature>
<feature type="disulfide bond" evidence="2">
    <location>
        <begin position="184"/>
        <end position="197"/>
    </location>
</feature>
<feature type="disulfide bond" evidence="2">
    <location>
        <begin position="191"/>
        <end position="211"/>
    </location>
</feature>
<feature type="disulfide bond" evidence="2">
    <location>
        <begin position="213"/>
        <end position="225"/>
    </location>
</feature>
<feature type="disulfide bond" evidence="2">
    <location>
        <begin position="256"/>
        <end position="269"/>
    </location>
</feature>
<feature type="disulfide bond" evidence="2">
    <location>
        <begin position="263"/>
        <end position="283"/>
    </location>
</feature>
<feature type="disulfide bond" evidence="2">
    <location>
        <begin position="285"/>
        <end position="297"/>
    </location>
</feature>
<evidence type="ECO:0000255" key="1"/>
<evidence type="ECO:0000255" key="2">
    <source>
        <dbReference type="PROSITE-ProRule" id="PRU00076"/>
    </source>
</evidence>
<evidence type="ECO:0000305" key="3"/>
<proteinExistence type="evidence at protein level"/>
<accession>P15217</accession>
<accession>P15218</accession>
<accession>P15219</accession>
<dbReference type="EMBL" id="Z48184">
    <property type="protein sequence ID" value="CAA88234.1"/>
    <property type="molecule type" value="mRNA"/>
</dbReference>
<dbReference type="PIR" id="S68985">
    <property type="entry name" value="S68985"/>
</dbReference>
<dbReference type="GO" id="GO:0005576">
    <property type="term" value="C:extracellular region"/>
    <property type="evidence" value="ECO:0007669"/>
    <property type="project" value="UniProtKB-KW"/>
</dbReference>
<dbReference type="GO" id="GO:0007369">
    <property type="term" value="P:gastrulation"/>
    <property type="evidence" value="ECO:0007669"/>
    <property type="project" value="UniProtKB-KW"/>
</dbReference>
<dbReference type="InterPro" id="IPR000742">
    <property type="entry name" value="EGF-like_dom"/>
</dbReference>
<dbReference type="SMART" id="SM00181">
    <property type="entry name" value="EGF"/>
    <property type="match status" value="4"/>
</dbReference>
<dbReference type="PROSITE" id="PS01186">
    <property type="entry name" value="EGF_2"/>
    <property type="match status" value="4"/>
</dbReference>
<dbReference type="PROSITE" id="PS50026">
    <property type="entry name" value="EGF_3"/>
    <property type="match status" value="3"/>
</dbReference>
<organism>
    <name type="scientific">Heliocidaris crassispina</name>
    <name type="common">Sea urchin</name>
    <name type="synonym">Anthocidaris crassispina</name>
    <dbReference type="NCBI Taxonomy" id="1043166"/>
    <lineage>
        <taxon>Eukaryota</taxon>
        <taxon>Metazoa</taxon>
        <taxon>Echinodermata</taxon>
        <taxon>Eleutherozoa</taxon>
        <taxon>Echinozoa</taxon>
        <taxon>Echinoidea</taxon>
        <taxon>Euechinoidea</taxon>
        <taxon>Echinacea</taxon>
        <taxon>Camarodonta</taxon>
        <taxon>Echinidea</taxon>
        <taxon>Echinometridae</taxon>
        <taxon>Heliocidaris</taxon>
    </lineage>
</organism>
<reference key="1">
    <citation type="journal article" date="1995" name="Eur. J. Biochem.">
        <title>Molecular cloning of a cDNA that encodes the precursor to several exogastrula-inducing peptides, epidermal-growth-factor-related polypeptides of the sea urchin Anthocidaris crassispina.</title>
        <authorList>
            <person name="Yamasu K."/>
            <person name="Watanabe H."/>
            <person name="Kohchi C."/>
            <person name="Soma G."/>
            <person name="Mizuno D."/>
            <person name="Akasaka K."/>
            <person name="Shimada H."/>
            <person name="Suyemitsu T."/>
            <person name="Ishihara K."/>
        </authorList>
    </citation>
    <scope>NUCLEOTIDE SEQUENCE [MRNA]</scope>
    <source>
        <tissue>Embryo</tissue>
    </source>
</reference>
<reference key="2">
    <citation type="journal article" date="1989" name="Cell Differ. Dev.">
        <title>The exogastrula-inducing peptides in embryos of the sea urchin, Anthocidaris crassispina -- isolation and determination of the primary structure.</title>
        <authorList>
            <person name="Suyemitsu T."/>
            <person name="Asami-Yoshizumi T."/>
            <person name="Noguchi S."/>
            <person name="Tonegawa Y."/>
            <person name="Ishihara K."/>
        </authorList>
    </citation>
    <scope>PROTEIN SEQUENCE OF 106-158 AND 179-230</scope>
    <source>
        <tissue>Embryo</tissue>
    </source>
</reference>
<reference key="3">
    <citation type="journal article" date="1989" name="Biochim. Biophys. Acta">
        <title>Amino acid sequence of exogastrula-inducing peptide C from the sea urchin, Anthocidaris crassispina.</title>
        <authorList>
            <person name="Suyemitsu T."/>
            <person name="Tonegawa Y."/>
            <person name="Ishihara K."/>
        </authorList>
    </citation>
    <scope>PROTEIN SEQUENCE OF 47-104</scope>
    <source>
        <tissue>Embryo</tissue>
    </source>
</reference>